<proteinExistence type="predicted"/>
<feature type="chain" id="PRO_0000283170" description="Putative F-box/kelch-repeat protein At1g15680">
    <location>
        <begin position="1"/>
        <end position="410"/>
    </location>
</feature>
<feature type="domain" description="F-box" evidence="1">
    <location>
        <begin position="13"/>
        <end position="58"/>
    </location>
</feature>
<feature type="repeat" description="Kelch 1">
    <location>
        <begin position="177"/>
        <end position="227"/>
    </location>
</feature>
<feature type="repeat" description="Kelch 2">
    <location>
        <begin position="274"/>
        <end position="327"/>
    </location>
</feature>
<dbReference type="EMBL" id="AC034256">
    <property type="protein sequence ID" value="AAF82138.1"/>
    <property type="molecule type" value="Genomic_DNA"/>
</dbReference>
<dbReference type="EMBL" id="CP002684">
    <property type="protein sequence ID" value="AEE29348.1"/>
    <property type="molecule type" value="Genomic_DNA"/>
</dbReference>
<dbReference type="PIR" id="H86290">
    <property type="entry name" value="H86290"/>
</dbReference>
<dbReference type="RefSeq" id="NP_173020.1">
    <property type="nucleotide sequence ID" value="NM_101436.1"/>
</dbReference>
<dbReference type="SMR" id="Q9LMR4"/>
<dbReference type="FunCoup" id="Q9LMR4">
    <property type="interactions" value="132"/>
</dbReference>
<dbReference type="STRING" id="3702.Q9LMR4"/>
<dbReference type="PaxDb" id="3702-AT1G15680.1"/>
<dbReference type="EnsemblPlants" id="AT1G15680.1">
    <property type="protein sequence ID" value="AT1G15680.1"/>
    <property type="gene ID" value="AT1G15680"/>
</dbReference>
<dbReference type="GeneID" id="838137"/>
<dbReference type="Gramene" id="AT1G15680.1">
    <property type="protein sequence ID" value="AT1G15680.1"/>
    <property type="gene ID" value="AT1G15680"/>
</dbReference>
<dbReference type="KEGG" id="ath:AT1G15680"/>
<dbReference type="Araport" id="AT1G15680"/>
<dbReference type="TAIR" id="AT1G15680"/>
<dbReference type="eggNOG" id="ENOG502SX8K">
    <property type="taxonomic scope" value="Eukaryota"/>
</dbReference>
<dbReference type="HOGENOM" id="CLU_029240_1_0_1"/>
<dbReference type="InParanoid" id="Q9LMR4"/>
<dbReference type="OMA" id="SESAIWW"/>
<dbReference type="PhylomeDB" id="Q9LMR4"/>
<dbReference type="PRO" id="PR:Q9LMR4"/>
<dbReference type="Proteomes" id="UP000006548">
    <property type="component" value="Chromosome 1"/>
</dbReference>
<dbReference type="ExpressionAtlas" id="Q9LMR4">
    <property type="expression patterns" value="differential"/>
</dbReference>
<dbReference type="CDD" id="cd22157">
    <property type="entry name" value="F-box_AtFBW1-like"/>
    <property type="match status" value="1"/>
</dbReference>
<dbReference type="Gene3D" id="1.20.1280.50">
    <property type="match status" value="1"/>
</dbReference>
<dbReference type="InterPro" id="IPR055290">
    <property type="entry name" value="At3g26010-like"/>
</dbReference>
<dbReference type="InterPro" id="IPR056592">
    <property type="entry name" value="At3g26010-like_b-prop"/>
</dbReference>
<dbReference type="InterPro" id="IPR036047">
    <property type="entry name" value="F-box-like_dom_sf"/>
</dbReference>
<dbReference type="InterPro" id="IPR001810">
    <property type="entry name" value="F-box_dom"/>
</dbReference>
<dbReference type="PANTHER" id="PTHR35546:SF25">
    <property type="entry name" value="F-BOX DOMAIN-CONTAINING PROTEIN"/>
    <property type="match status" value="1"/>
</dbReference>
<dbReference type="PANTHER" id="PTHR35546">
    <property type="entry name" value="F-BOX PROTEIN INTERACTION DOMAIN PROTEIN-RELATED"/>
    <property type="match status" value="1"/>
</dbReference>
<dbReference type="Pfam" id="PF24750">
    <property type="entry name" value="b-prop_At3g26010-like"/>
    <property type="match status" value="1"/>
</dbReference>
<dbReference type="Pfam" id="PF00646">
    <property type="entry name" value="F-box"/>
    <property type="match status" value="1"/>
</dbReference>
<dbReference type="SMART" id="SM00256">
    <property type="entry name" value="FBOX"/>
    <property type="match status" value="1"/>
</dbReference>
<dbReference type="SUPFAM" id="SSF81383">
    <property type="entry name" value="F-box domain"/>
    <property type="match status" value="1"/>
</dbReference>
<dbReference type="PROSITE" id="PS50181">
    <property type="entry name" value="FBOX"/>
    <property type="match status" value="1"/>
</dbReference>
<accession>Q9LMR4</accession>
<name>FBK4_ARATH</name>
<gene>
    <name type="ordered locus">At1g15680</name>
    <name type="ORF">F7H2.2</name>
</gene>
<organism>
    <name type="scientific">Arabidopsis thaliana</name>
    <name type="common">Mouse-ear cress</name>
    <dbReference type="NCBI Taxonomy" id="3702"/>
    <lineage>
        <taxon>Eukaryota</taxon>
        <taxon>Viridiplantae</taxon>
        <taxon>Streptophyta</taxon>
        <taxon>Embryophyta</taxon>
        <taxon>Tracheophyta</taxon>
        <taxon>Spermatophyta</taxon>
        <taxon>Magnoliopsida</taxon>
        <taxon>eudicotyledons</taxon>
        <taxon>Gunneridae</taxon>
        <taxon>Pentapetalae</taxon>
        <taxon>rosids</taxon>
        <taxon>malvids</taxon>
        <taxon>Brassicales</taxon>
        <taxon>Brassicaceae</taxon>
        <taxon>Camelineae</taxon>
        <taxon>Arabidopsis</taxon>
    </lineage>
</organism>
<keyword id="KW-0880">Kelch repeat</keyword>
<keyword id="KW-1185">Reference proteome</keyword>
<keyword id="KW-0677">Repeat</keyword>
<reference key="1">
    <citation type="journal article" date="2000" name="Nature">
        <title>Sequence and analysis of chromosome 1 of the plant Arabidopsis thaliana.</title>
        <authorList>
            <person name="Theologis A."/>
            <person name="Ecker J.R."/>
            <person name="Palm C.J."/>
            <person name="Federspiel N.A."/>
            <person name="Kaul S."/>
            <person name="White O."/>
            <person name="Alonso J."/>
            <person name="Altafi H."/>
            <person name="Araujo R."/>
            <person name="Bowman C.L."/>
            <person name="Brooks S.Y."/>
            <person name="Buehler E."/>
            <person name="Chan A."/>
            <person name="Chao Q."/>
            <person name="Chen H."/>
            <person name="Cheuk R.F."/>
            <person name="Chin C.W."/>
            <person name="Chung M.K."/>
            <person name="Conn L."/>
            <person name="Conway A.B."/>
            <person name="Conway A.R."/>
            <person name="Creasy T.H."/>
            <person name="Dewar K."/>
            <person name="Dunn P."/>
            <person name="Etgu P."/>
            <person name="Feldblyum T.V."/>
            <person name="Feng J.-D."/>
            <person name="Fong B."/>
            <person name="Fujii C.Y."/>
            <person name="Gill J.E."/>
            <person name="Goldsmith A.D."/>
            <person name="Haas B."/>
            <person name="Hansen N.F."/>
            <person name="Hughes B."/>
            <person name="Huizar L."/>
            <person name="Hunter J.L."/>
            <person name="Jenkins J."/>
            <person name="Johnson-Hopson C."/>
            <person name="Khan S."/>
            <person name="Khaykin E."/>
            <person name="Kim C.J."/>
            <person name="Koo H.L."/>
            <person name="Kremenetskaia I."/>
            <person name="Kurtz D.B."/>
            <person name="Kwan A."/>
            <person name="Lam B."/>
            <person name="Langin-Hooper S."/>
            <person name="Lee A."/>
            <person name="Lee J.M."/>
            <person name="Lenz C.A."/>
            <person name="Li J.H."/>
            <person name="Li Y.-P."/>
            <person name="Lin X."/>
            <person name="Liu S.X."/>
            <person name="Liu Z.A."/>
            <person name="Luros J.S."/>
            <person name="Maiti R."/>
            <person name="Marziali A."/>
            <person name="Militscher J."/>
            <person name="Miranda M."/>
            <person name="Nguyen M."/>
            <person name="Nierman W.C."/>
            <person name="Osborne B.I."/>
            <person name="Pai G."/>
            <person name="Peterson J."/>
            <person name="Pham P.K."/>
            <person name="Rizzo M."/>
            <person name="Rooney T."/>
            <person name="Rowley D."/>
            <person name="Sakano H."/>
            <person name="Salzberg S.L."/>
            <person name="Schwartz J.R."/>
            <person name="Shinn P."/>
            <person name="Southwick A.M."/>
            <person name="Sun H."/>
            <person name="Tallon L.J."/>
            <person name="Tambunga G."/>
            <person name="Toriumi M.J."/>
            <person name="Town C.D."/>
            <person name="Utterback T."/>
            <person name="Van Aken S."/>
            <person name="Vaysberg M."/>
            <person name="Vysotskaia V.S."/>
            <person name="Walker M."/>
            <person name="Wu D."/>
            <person name="Yu G."/>
            <person name="Fraser C.M."/>
            <person name="Venter J.C."/>
            <person name="Davis R.W."/>
        </authorList>
    </citation>
    <scope>NUCLEOTIDE SEQUENCE [LARGE SCALE GENOMIC DNA]</scope>
    <source>
        <strain>cv. Columbia</strain>
    </source>
</reference>
<reference key="2">
    <citation type="journal article" date="2017" name="Plant J.">
        <title>Araport11: a complete reannotation of the Arabidopsis thaliana reference genome.</title>
        <authorList>
            <person name="Cheng C.Y."/>
            <person name="Krishnakumar V."/>
            <person name="Chan A.P."/>
            <person name="Thibaud-Nissen F."/>
            <person name="Schobel S."/>
            <person name="Town C.D."/>
        </authorList>
    </citation>
    <scope>GENOME REANNOTATION</scope>
    <source>
        <strain>cv. Columbia</strain>
    </source>
</reference>
<protein>
    <recommendedName>
        <fullName>Putative F-box/kelch-repeat protein At1g15680</fullName>
    </recommendedName>
</protein>
<sequence length="410" mass="47355">MENREVNWMKSGCKRRIELPEELLAEIVARLPFISITRFKSVCKGWRSLIESTYFRHLFVFAHRNSSSSWSLVCGTFGWSVEEMAGFYGCKRYGLPRRLGSYIPPHGLVDKHKIVACTDGLVLLQTVTKRETFSVGSPVLRQWVQLPPHPWKGISSSVLAIGLVTRVEDGVVMEYKVVCMDIDYRWEVESLILEIYSSLTGTWTRKKVRCPSLIVSLSYKRCLSLKKMLHWLDTHYRCRSSVGAIVAYDVYADDDEQQFRIIPFPDQKACFRRAYTTSGGFLVCINKIHLLLRLWRLEEYTSDSGRWQLTQEINLTSFGCDHHYFPVAMHPSETHITYMGNPEKALVSIDLKTHKLTLHTKSSAYRDTMVYHYLDTVYVSVEASFDHDVFYTPQFTLPTWMGSVPRSPSI</sequence>
<evidence type="ECO:0000255" key="1">
    <source>
        <dbReference type="PROSITE-ProRule" id="PRU00080"/>
    </source>
</evidence>